<protein>
    <recommendedName>
        <fullName evidence="1">NADH-quinone oxidoreductase subunit C/D</fullName>
        <ecNumber evidence="1">7.1.1.-</ecNumber>
    </recommendedName>
    <alternativeName>
        <fullName evidence="1">NADH dehydrogenase I subunit C/D</fullName>
    </alternativeName>
    <alternativeName>
        <fullName evidence="1">NDH-1 subunit C/D</fullName>
    </alternativeName>
</protein>
<comment type="function">
    <text evidence="1">NDH-1 shuttles electrons from NADH, via FMN and iron-sulfur (Fe-S) centers, to quinones in the respiratory chain. The immediate electron acceptor for the enzyme in this species is believed to be ubiquinone. Couples the redox reaction to proton translocation (for every two electrons transferred, four hydrogen ions are translocated across the cytoplasmic membrane), and thus conserves the redox energy in a proton gradient.</text>
</comment>
<comment type="catalytic activity">
    <reaction evidence="1">
        <text>a quinone + NADH + 5 H(+)(in) = a quinol + NAD(+) + 4 H(+)(out)</text>
        <dbReference type="Rhea" id="RHEA:57888"/>
        <dbReference type="ChEBI" id="CHEBI:15378"/>
        <dbReference type="ChEBI" id="CHEBI:24646"/>
        <dbReference type="ChEBI" id="CHEBI:57540"/>
        <dbReference type="ChEBI" id="CHEBI:57945"/>
        <dbReference type="ChEBI" id="CHEBI:132124"/>
    </reaction>
</comment>
<comment type="subunit">
    <text evidence="1">NDH-1 is composed of 13 different subunits. Subunits NuoB, CD, E, F, and G constitute the peripheral sector of the complex.</text>
</comment>
<comment type="subcellular location">
    <subcellularLocation>
        <location evidence="1">Cell inner membrane</location>
        <topology evidence="1">Peripheral membrane protein</topology>
        <orientation evidence="1">Cytoplasmic side</orientation>
    </subcellularLocation>
</comment>
<comment type="similarity">
    <text evidence="1">In the N-terminal section; belongs to the complex I 30 kDa subunit family.</text>
</comment>
<comment type="similarity">
    <text evidence="1">In the C-terminal section; belongs to the complex I 49 kDa subunit family.</text>
</comment>
<proteinExistence type="inferred from homology"/>
<evidence type="ECO:0000255" key="1">
    <source>
        <dbReference type="HAMAP-Rule" id="MF_01359"/>
    </source>
</evidence>
<sequence>MVNNMTDLTAQDAVWQTRDHLDDPVIGELRNRFGPDAFTVQATRTGVPVVWVKREQLLEVGDFLKKLPKPYVMLFDLHGMDERLRTHRDGLPAADFSVFYHLISIDRNRDIMLKVALSENDLHVPTFTKLFPNANWYERETWEMFGITFDGHPHLTRLLMPPTWEGHPLRKDYPARATEFDPFELTKAKQDLEMEALTFKPEDWGMQRGTENEDFMFLNLGPNHPSSHGAFRIVLQLDGEEIVDCVPDIGYHHRGAEKMGERQSWHSYIPYTDRIEYLGGCVNEMPYVLAVEKLAGITVPDRVNVIRVMLSELFRINSHLLYISTFIQDVGAMTPVFFAFTDRQKIYDVVEAITGFRMHPAWFRIGGVAHDLPRGWDRLLRDFLDWMPKRLDSYEKAALRNTILKGRSQGVAAYGKKEALDWGCTGAALRATGIDFDVRKSRPYSGYENFDFEIPVGGGVSDCYTRVMLKVEELRQSLRILEQCLNNMPEGPFKADHPLTTPPPKERTLQHIETLITHFLQVSWGPVMPANESFQMVEATKGINSYYLTSDGSTMSYRTRIRTPSYAHLQQIPVAVRGSLVSDLIVHLGSIDFVMSDVDR</sequence>
<feature type="chain" id="PRO_0000358627" description="NADH-quinone oxidoreductase subunit C/D">
    <location>
        <begin position="1"/>
        <end position="600"/>
    </location>
</feature>
<feature type="region of interest" description="NADH dehydrogenase I subunit C" evidence="1">
    <location>
        <begin position="1"/>
        <end position="190"/>
    </location>
</feature>
<feature type="region of interest" description="NADH dehydrogenase I subunit D" evidence="1">
    <location>
        <begin position="214"/>
        <end position="600"/>
    </location>
</feature>
<organism>
    <name type="scientific">Citrobacter koseri (strain ATCC BAA-895 / CDC 4225-83 / SGSC4696)</name>
    <dbReference type="NCBI Taxonomy" id="290338"/>
    <lineage>
        <taxon>Bacteria</taxon>
        <taxon>Pseudomonadati</taxon>
        <taxon>Pseudomonadota</taxon>
        <taxon>Gammaproteobacteria</taxon>
        <taxon>Enterobacterales</taxon>
        <taxon>Enterobacteriaceae</taxon>
        <taxon>Citrobacter</taxon>
    </lineage>
</organism>
<keyword id="KW-0997">Cell inner membrane</keyword>
<keyword id="KW-1003">Cell membrane</keyword>
<keyword id="KW-0472">Membrane</keyword>
<keyword id="KW-0511">Multifunctional enzyme</keyword>
<keyword id="KW-0520">NAD</keyword>
<keyword id="KW-0874">Quinone</keyword>
<keyword id="KW-1185">Reference proteome</keyword>
<keyword id="KW-1278">Translocase</keyword>
<keyword id="KW-0813">Transport</keyword>
<keyword id="KW-0830">Ubiquinone</keyword>
<dbReference type="EC" id="7.1.1.-" evidence="1"/>
<dbReference type="EMBL" id="CP000822">
    <property type="protein sequence ID" value="ABV11666.1"/>
    <property type="molecule type" value="Genomic_DNA"/>
</dbReference>
<dbReference type="SMR" id="A8ADV3"/>
<dbReference type="STRING" id="290338.CKO_00510"/>
<dbReference type="KEGG" id="cko:CKO_00510"/>
<dbReference type="HOGENOM" id="CLU_015134_3_2_6"/>
<dbReference type="OrthoDB" id="9801496at2"/>
<dbReference type="Proteomes" id="UP000008148">
    <property type="component" value="Chromosome"/>
</dbReference>
<dbReference type="GO" id="GO:0030964">
    <property type="term" value="C:NADH dehydrogenase complex"/>
    <property type="evidence" value="ECO:0007669"/>
    <property type="project" value="InterPro"/>
</dbReference>
<dbReference type="GO" id="GO:0005886">
    <property type="term" value="C:plasma membrane"/>
    <property type="evidence" value="ECO:0007669"/>
    <property type="project" value="UniProtKB-SubCell"/>
</dbReference>
<dbReference type="GO" id="GO:0051287">
    <property type="term" value="F:NAD binding"/>
    <property type="evidence" value="ECO:0007669"/>
    <property type="project" value="InterPro"/>
</dbReference>
<dbReference type="GO" id="GO:0008137">
    <property type="term" value="F:NADH dehydrogenase (ubiquinone) activity"/>
    <property type="evidence" value="ECO:0007669"/>
    <property type="project" value="InterPro"/>
</dbReference>
<dbReference type="GO" id="GO:0050136">
    <property type="term" value="F:NADH:ubiquinone reductase (non-electrogenic) activity"/>
    <property type="evidence" value="ECO:0007669"/>
    <property type="project" value="UniProtKB-UniRule"/>
</dbReference>
<dbReference type="GO" id="GO:0048038">
    <property type="term" value="F:quinone binding"/>
    <property type="evidence" value="ECO:0007669"/>
    <property type="project" value="UniProtKB-KW"/>
</dbReference>
<dbReference type="FunFam" id="1.10.645.10:FF:000001">
    <property type="entry name" value="NADH-quinone oxidoreductase subunit C/D"/>
    <property type="match status" value="1"/>
</dbReference>
<dbReference type="FunFam" id="3.30.460.80:FF:000001">
    <property type="entry name" value="NADH-quinone oxidoreductase subunit C/D"/>
    <property type="match status" value="1"/>
</dbReference>
<dbReference type="Gene3D" id="1.10.645.10">
    <property type="entry name" value="Cytochrome-c3 Hydrogenase, chain B"/>
    <property type="match status" value="1"/>
</dbReference>
<dbReference type="Gene3D" id="3.30.460.80">
    <property type="entry name" value="NADH:ubiquinone oxidoreductase, 30kDa subunit"/>
    <property type="match status" value="1"/>
</dbReference>
<dbReference type="HAMAP" id="MF_01359">
    <property type="entry name" value="NDH1_NuoCD_1"/>
    <property type="match status" value="1"/>
</dbReference>
<dbReference type="HAMAP" id="MF_01358">
    <property type="entry name" value="NDH1_NuoD"/>
    <property type="match status" value="1"/>
</dbReference>
<dbReference type="InterPro" id="IPR010218">
    <property type="entry name" value="NADH_DH_suC"/>
</dbReference>
<dbReference type="InterPro" id="IPR023062">
    <property type="entry name" value="NADH_DH_suCD"/>
</dbReference>
<dbReference type="InterPro" id="IPR001135">
    <property type="entry name" value="NADH_Q_OxRdtase_suD"/>
</dbReference>
<dbReference type="InterPro" id="IPR037232">
    <property type="entry name" value="NADH_quin_OxRdtase_su_C/D-like"/>
</dbReference>
<dbReference type="InterPro" id="IPR001268">
    <property type="entry name" value="NADH_UbQ_OxRdtase_30kDa_su"/>
</dbReference>
<dbReference type="InterPro" id="IPR014029">
    <property type="entry name" value="NADH_UbQ_OxRdtase_49kDa_CS"/>
</dbReference>
<dbReference type="InterPro" id="IPR022885">
    <property type="entry name" value="NDH1_su_D/H"/>
</dbReference>
<dbReference type="InterPro" id="IPR029014">
    <property type="entry name" value="NiFe-Hase_large"/>
</dbReference>
<dbReference type="NCBIfam" id="TIGR01961">
    <property type="entry name" value="NuoC_fam"/>
    <property type="match status" value="1"/>
</dbReference>
<dbReference type="NCBIfam" id="TIGR01962">
    <property type="entry name" value="NuoD"/>
    <property type="match status" value="1"/>
</dbReference>
<dbReference type="NCBIfam" id="NF004739">
    <property type="entry name" value="PRK06075.1"/>
    <property type="match status" value="1"/>
</dbReference>
<dbReference type="NCBIfam" id="NF008728">
    <property type="entry name" value="PRK11742.1"/>
    <property type="match status" value="1"/>
</dbReference>
<dbReference type="PANTHER" id="PTHR11993:SF45">
    <property type="entry name" value="NADH-QUINONE OXIDOREDUCTASE SUBUNIT C_D"/>
    <property type="match status" value="1"/>
</dbReference>
<dbReference type="PANTHER" id="PTHR11993">
    <property type="entry name" value="NADH-UBIQUINONE OXIDOREDUCTASE 49 KDA SUBUNIT"/>
    <property type="match status" value="1"/>
</dbReference>
<dbReference type="Pfam" id="PF00329">
    <property type="entry name" value="Complex1_30kDa"/>
    <property type="match status" value="1"/>
</dbReference>
<dbReference type="Pfam" id="PF00346">
    <property type="entry name" value="Complex1_49kDa"/>
    <property type="match status" value="1"/>
</dbReference>
<dbReference type="SUPFAM" id="SSF56762">
    <property type="entry name" value="HydB/Nqo4-like"/>
    <property type="match status" value="1"/>
</dbReference>
<dbReference type="SUPFAM" id="SSF143243">
    <property type="entry name" value="Nqo5-like"/>
    <property type="match status" value="1"/>
</dbReference>
<dbReference type="PROSITE" id="PS00535">
    <property type="entry name" value="COMPLEX1_49K"/>
    <property type="match status" value="1"/>
</dbReference>
<gene>
    <name evidence="1" type="primary">nuoC</name>
    <name evidence="1" type="synonym">nuoCD</name>
    <name evidence="1" type="synonym">nuoD</name>
    <name type="ordered locus">CKO_00510</name>
</gene>
<accession>A8ADV3</accession>
<name>NUOCD_CITK8</name>
<reference key="1">
    <citation type="submission" date="2007-08" db="EMBL/GenBank/DDBJ databases">
        <authorList>
            <consortium name="The Citrobacter koseri Genome Sequencing Project"/>
            <person name="McClelland M."/>
            <person name="Sanderson E.K."/>
            <person name="Porwollik S."/>
            <person name="Spieth J."/>
            <person name="Clifton W.S."/>
            <person name="Latreille P."/>
            <person name="Courtney L."/>
            <person name="Wang C."/>
            <person name="Pepin K."/>
            <person name="Bhonagiri V."/>
            <person name="Nash W."/>
            <person name="Johnson M."/>
            <person name="Thiruvilangam P."/>
            <person name="Wilson R."/>
        </authorList>
    </citation>
    <scope>NUCLEOTIDE SEQUENCE [LARGE SCALE GENOMIC DNA]</scope>
    <source>
        <strain>ATCC BAA-895 / CDC 4225-83 / SGSC4696</strain>
    </source>
</reference>